<feature type="chain" id="PRO_0000230232" description="Glycogen synthase 1">
    <location>
        <begin position="1"/>
        <end position="492"/>
    </location>
</feature>
<feature type="binding site" evidence="1">
    <location>
        <position position="15"/>
    </location>
    <ligand>
        <name>ADP-alpha-D-glucose</name>
        <dbReference type="ChEBI" id="CHEBI:57498"/>
    </ligand>
</feature>
<organism>
    <name type="scientific">Trichormus variabilis (strain ATCC 29413 / PCC 7937)</name>
    <name type="common">Anabaena variabilis</name>
    <dbReference type="NCBI Taxonomy" id="240292"/>
    <lineage>
        <taxon>Bacteria</taxon>
        <taxon>Bacillati</taxon>
        <taxon>Cyanobacteriota</taxon>
        <taxon>Cyanophyceae</taxon>
        <taxon>Nostocales</taxon>
        <taxon>Nostocaceae</taxon>
        <taxon>Trichormus</taxon>
    </lineage>
</organism>
<keyword id="KW-0320">Glycogen biosynthesis</keyword>
<keyword id="KW-0328">Glycosyltransferase</keyword>
<keyword id="KW-0808">Transferase</keyword>
<proteinExistence type="inferred from homology"/>
<sequence>MYIVQIASECAPVIKAGGLGDVVYGLSRELEIRGNCVELILPKYDCMRYDHIWGLHEAYLNLWVPWFGAAIHCTVYCGWVHGRVCFFIEPHSEDNFFNRGCYYGCDDDDMRFAFFSKAALEFLHQSNKRPDIIHCHDWQTGLVPVMLYEIYKYHGMDTQRVCYTIHNFKHQGIGGVKTLWATGLNREAYYFQNDKLQDDFNPFALNYMKGGIVYSNAVTTVSPNHALEAQYTDVGCGLGHTLYQHKDKFSGILNGIDYDFWNPEIDRYIPYNYNQEDFEQKLYNKKALRERLLLQAADKPIIAYIGRLDNQKGVHLVHHAIYHSLNKGAQFVLLGSATEAGINAHFRHEKQFLNNNPDVHLELGFNEELSHLIYAGADMIVVPSNYEPCGLTQMIGLKYGTVPIVRGVGGLVNTVFDRDYDQNLPPEKRNGYVFYQSDNQALESAMNRAIDLWYQSPEKFQQLAIQGMKYDYSWNNPGKEYLDIYEWIKYKW</sequence>
<reference key="1">
    <citation type="journal article" date="2014" name="Stand. Genomic Sci.">
        <title>Complete genome sequence of Anabaena variabilis ATCC 29413.</title>
        <authorList>
            <person name="Thiel T."/>
            <person name="Pratte B.S."/>
            <person name="Zhong J."/>
            <person name="Goodwin L."/>
            <person name="Copeland A."/>
            <person name="Lucas S."/>
            <person name="Han C."/>
            <person name="Pitluck S."/>
            <person name="Land M.L."/>
            <person name="Kyrpides N.C."/>
            <person name="Woyke T."/>
        </authorList>
    </citation>
    <scope>NUCLEOTIDE SEQUENCE [LARGE SCALE GENOMIC DNA]</scope>
    <source>
        <strain>ATCC 29413 / PCC 7937</strain>
    </source>
</reference>
<comment type="function">
    <text evidence="1">Synthesizes alpha-1,4-glucan chains using ADP-glucose.</text>
</comment>
<comment type="catalytic activity">
    <reaction evidence="1">
        <text>[(1-&gt;4)-alpha-D-glucosyl](n) + ADP-alpha-D-glucose = [(1-&gt;4)-alpha-D-glucosyl](n+1) + ADP + H(+)</text>
        <dbReference type="Rhea" id="RHEA:18189"/>
        <dbReference type="Rhea" id="RHEA-COMP:9584"/>
        <dbReference type="Rhea" id="RHEA-COMP:9587"/>
        <dbReference type="ChEBI" id="CHEBI:15378"/>
        <dbReference type="ChEBI" id="CHEBI:15444"/>
        <dbReference type="ChEBI" id="CHEBI:57498"/>
        <dbReference type="ChEBI" id="CHEBI:456216"/>
        <dbReference type="EC" id="2.4.1.21"/>
    </reaction>
</comment>
<comment type="pathway">
    <text evidence="1">Glycan biosynthesis; glycogen biosynthesis.</text>
</comment>
<comment type="similarity">
    <text evidence="1">Belongs to the glycosyltransferase 1 family. Bacterial/plant glycogen synthase subfamily.</text>
</comment>
<evidence type="ECO:0000255" key="1">
    <source>
        <dbReference type="HAMAP-Rule" id="MF_00484"/>
    </source>
</evidence>
<name>GLGA1_TRIV2</name>
<dbReference type="EC" id="2.4.1.21" evidence="1"/>
<dbReference type="EMBL" id="CP000117">
    <property type="protein sequence ID" value="ABA22245.1"/>
    <property type="molecule type" value="Genomic_DNA"/>
</dbReference>
<dbReference type="SMR" id="Q3M9U1"/>
<dbReference type="STRING" id="240292.Ava_2631"/>
<dbReference type="CAZy" id="GT5">
    <property type="family name" value="Glycosyltransferase Family 5"/>
</dbReference>
<dbReference type="KEGG" id="ava:Ava_2631"/>
<dbReference type="eggNOG" id="COG0297">
    <property type="taxonomic scope" value="Bacteria"/>
</dbReference>
<dbReference type="HOGENOM" id="CLU_009583_18_3_3"/>
<dbReference type="UniPathway" id="UPA00164"/>
<dbReference type="Proteomes" id="UP000002533">
    <property type="component" value="Chromosome"/>
</dbReference>
<dbReference type="GO" id="GO:0009011">
    <property type="term" value="F:alpha-1,4-glucan glucosyltransferase (ADP-glucose donor) activity"/>
    <property type="evidence" value="ECO:0007669"/>
    <property type="project" value="UniProtKB-UniRule"/>
</dbReference>
<dbReference type="GO" id="GO:0004373">
    <property type="term" value="F:alpha-1,4-glucan glucosyltransferase (UDP-glucose donor) activity"/>
    <property type="evidence" value="ECO:0007669"/>
    <property type="project" value="InterPro"/>
</dbReference>
<dbReference type="GO" id="GO:0005978">
    <property type="term" value="P:glycogen biosynthetic process"/>
    <property type="evidence" value="ECO:0007669"/>
    <property type="project" value="UniProtKB-UniRule"/>
</dbReference>
<dbReference type="CDD" id="cd03791">
    <property type="entry name" value="GT5_Glycogen_synthase_DULL1-like"/>
    <property type="match status" value="1"/>
</dbReference>
<dbReference type="Gene3D" id="3.40.50.2000">
    <property type="entry name" value="Glycogen Phosphorylase B"/>
    <property type="match status" value="2"/>
</dbReference>
<dbReference type="HAMAP" id="MF_00484">
    <property type="entry name" value="Glycogen_synth"/>
    <property type="match status" value="1"/>
</dbReference>
<dbReference type="InterPro" id="IPR001296">
    <property type="entry name" value="Glyco_trans_1"/>
</dbReference>
<dbReference type="InterPro" id="IPR011835">
    <property type="entry name" value="GS/SS"/>
</dbReference>
<dbReference type="InterPro" id="IPR013534">
    <property type="entry name" value="Starch_synth_cat_dom"/>
</dbReference>
<dbReference type="NCBIfam" id="TIGR02095">
    <property type="entry name" value="glgA"/>
    <property type="match status" value="1"/>
</dbReference>
<dbReference type="NCBIfam" id="NF001902">
    <property type="entry name" value="PRK00654.2-1"/>
    <property type="match status" value="1"/>
</dbReference>
<dbReference type="NCBIfam" id="NF001905">
    <property type="entry name" value="PRK00654.2-4"/>
    <property type="match status" value="1"/>
</dbReference>
<dbReference type="PANTHER" id="PTHR46083">
    <property type="match status" value="1"/>
</dbReference>
<dbReference type="PANTHER" id="PTHR46083:SF1">
    <property type="entry name" value="GLYCOGEN SYNTHASE 2-RELATED"/>
    <property type="match status" value="1"/>
</dbReference>
<dbReference type="Pfam" id="PF08323">
    <property type="entry name" value="Glyco_transf_5"/>
    <property type="match status" value="1"/>
</dbReference>
<dbReference type="Pfam" id="PF00534">
    <property type="entry name" value="Glycos_transf_1"/>
    <property type="match status" value="1"/>
</dbReference>
<dbReference type="SUPFAM" id="SSF53756">
    <property type="entry name" value="UDP-Glycosyltransferase/glycogen phosphorylase"/>
    <property type="match status" value="1"/>
</dbReference>
<accession>Q3M9U1</accession>
<protein>
    <recommendedName>
        <fullName evidence="1">Glycogen synthase 1</fullName>
        <ecNumber evidence="1">2.4.1.21</ecNumber>
    </recommendedName>
    <alternativeName>
        <fullName evidence="1">Starch [bacterial glycogen] synthase 1</fullName>
    </alternativeName>
</protein>
<gene>
    <name evidence="1" type="primary">glgA1</name>
    <name type="ordered locus">Ava_2631</name>
</gene>